<gene>
    <name evidence="1" type="primary">clpS</name>
    <name type="ordered locus">HRM2_26660</name>
</gene>
<feature type="chain" id="PRO_1000204971" description="ATP-dependent Clp protease adapter protein ClpS">
    <location>
        <begin position="1"/>
        <end position="104"/>
    </location>
</feature>
<keyword id="KW-1185">Reference proteome</keyword>
<proteinExistence type="inferred from homology"/>
<organism>
    <name type="scientific">Desulforapulum autotrophicum (strain ATCC 43914 / DSM 3382 / VKM B-1955 / HRM2)</name>
    <name type="common">Desulfobacterium autotrophicum</name>
    <dbReference type="NCBI Taxonomy" id="177437"/>
    <lineage>
        <taxon>Bacteria</taxon>
        <taxon>Pseudomonadati</taxon>
        <taxon>Thermodesulfobacteriota</taxon>
        <taxon>Desulfobacteria</taxon>
        <taxon>Desulfobacterales</taxon>
        <taxon>Desulfobacteraceae</taxon>
        <taxon>Desulforapulum</taxon>
    </lineage>
</organism>
<accession>C0QI24</accession>
<reference key="1">
    <citation type="journal article" date="2009" name="Environ. Microbiol.">
        <title>Genome sequence of Desulfobacterium autotrophicum HRM2, a marine sulfate reducer oxidizing organic carbon completely to carbon dioxide.</title>
        <authorList>
            <person name="Strittmatter A.W."/>
            <person name="Liesegang H."/>
            <person name="Rabus R."/>
            <person name="Decker I."/>
            <person name="Amann J."/>
            <person name="Andres S."/>
            <person name="Henne A."/>
            <person name="Fricke W.F."/>
            <person name="Martinez-Arias R."/>
            <person name="Bartels D."/>
            <person name="Goesmann A."/>
            <person name="Krause L."/>
            <person name="Puehler A."/>
            <person name="Klenk H.P."/>
            <person name="Richter M."/>
            <person name="Schuler M."/>
            <person name="Gloeckner F.O."/>
            <person name="Meyerdierks A."/>
            <person name="Gottschalk G."/>
            <person name="Amann R."/>
        </authorList>
    </citation>
    <scope>NUCLEOTIDE SEQUENCE [LARGE SCALE GENOMIC DNA]</scope>
    <source>
        <strain>ATCC 43914 / DSM 3382 / VKM B-1955 / HRM2</strain>
    </source>
</reference>
<dbReference type="EMBL" id="CP001087">
    <property type="protein sequence ID" value="ACN15760.1"/>
    <property type="molecule type" value="Genomic_DNA"/>
</dbReference>
<dbReference type="RefSeq" id="WP_015904523.1">
    <property type="nucleotide sequence ID" value="NC_012108.1"/>
</dbReference>
<dbReference type="SMR" id="C0QI24"/>
<dbReference type="STRING" id="177437.HRM2_26660"/>
<dbReference type="KEGG" id="dat:HRM2_26660"/>
<dbReference type="eggNOG" id="COG2127">
    <property type="taxonomic scope" value="Bacteria"/>
</dbReference>
<dbReference type="HOGENOM" id="CLU_134358_1_0_7"/>
<dbReference type="OrthoDB" id="9796121at2"/>
<dbReference type="Proteomes" id="UP000000442">
    <property type="component" value="Chromosome"/>
</dbReference>
<dbReference type="GO" id="GO:0030163">
    <property type="term" value="P:protein catabolic process"/>
    <property type="evidence" value="ECO:0007669"/>
    <property type="project" value="InterPro"/>
</dbReference>
<dbReference type="GO" id="GO:0006508">
    <property type="term" value="P:proteolysis"/>
    <property type="evidence" value="ECO:0007669"/>
    <property type="project" value="UniProtKB-UniRule"/>
</dbReference>
<dbReference type="FunFam" id="3.30.1390.10:FF:000002">
    <property type="entry name" value="ATP-dependent Clp protease adapter protein ClpS"/>
    <property type="match status" value="1"/>
</dbReference>
<dbReference type="Gene3D" id="3.30.1390.10">
    <property type="match status" value="1"/>
</dbReference>
<dbReference type="HAMAP" id="MF_00302">
    <property type="entry name" value="ClpS"/>
    <property type="match status" value="1"/>
</dbReference>
<dbReference type="InterPro" id="IPR022935">
    <property type="entry name" value="ClpS"/>
</dbReference>
<dbReference type="InterPro" id="IPR003769">
    <property type="entry name" value="ClpS_core"/>
</dbReference>
<dbReference type="InterPro" id="IPR014719">
    <property type="entry name" value="Ribosomal_bL12_C/ClpS-like"/>
</dbReference>
<dbReference type="NCBIfam" id="NF000672">
    <property type="entry name" value="PRK00033.1-5"/>
    <property type="match status" value="1"/>
</dbReference>
<dbReference type="PANTHER" id="PTHR33473:SF19">
    <property type="entry name" value="ATP-DEPENDENT CLP PROTEASE ADAPTER PROTEIN CLPS"/>
    <property type="match status" value="1"/>
</dbReference>
<dbReference type="PANTHER" id="PTHR33473">
    <property type="entry name" value="ATP-DEPENDENT CLP PROTEASE ADAPTER PROTEIN CLPS1, CHLOROPLASTIC"/>
    <property type="match status" value="1"/>
</dbReference>
<dbReference type="Pfam" id="PF02617">
    <property type="entry name" value="ClpS"/>
    <property type="match status" value="1"/>
</dbReference>
<dbReference type="SUPFAM" id="SSF54736">
    <property type="entry name" value="ClpS-like"/>
    <property type="match status" value="1"/>
</dbReference>
<protein>
    <recommendedName>
        <fullName evidence="1">ATP-dependent Clp protease adapter protein ClpS</fullName>
    </recommendedName>
</protein>
<comment type="function">
    <text evidence="1">Involved in the modulation of the specificity of the ClpAP-mediated ATP-dependent protein degradation.</text>
</comment>
<comment type="subunit">
    <text evidence="1">Binds to the N-terminal domain of the chaperone ClpA.</text>
</comment>
<comment type="similarity">
    <text evidence="1">Belongs to the ClpS family.</text>
</comment>
<evidence type="ECO:0000255" key="1">
    <source>
        <dbReference type="HAMAP-Rule" id="MF_00302"/>
    </source>
</evidence>
<name>CLPS_DESAH</name>
<sequence>MSLNEPSIKQRTSSKVEKKEGYPPMYRVVLHNDDYTTMEFVVQILITVFGKSLEKASIIMLNIHKQGKGICGSYTREVAETKVNTVHHLAREQGFPLKSTMEKE</sequence>